<accession>Q39ZK0</accession>
<keyword id="KW-0067">ATP-binding</keyword>
<keyword id="KW-0436">Ligase</keyword>
<keyword id="KW-0547">Nucleotide-binding</keyword>
<keyword id="KW-0648">Protein biosynthesis</keyword>
<keyword id="KW-1185">Reference proteome</keyword>
<name>GATA_GEOMG</name>
<feature type="chain" id="PRO_0000241105" description="Glutamyl-tRNA(Gln) amidotransferase subunit A">
    <location>
        <begin position="1"/>
        <end position="485"/>
    </location>
</feature>
<feature type="active site" description="Charge relay system" evidence="1">
    <location>
        <position position="78"/>
    </location>
</feature>
<feature type="active site" description="Charge relay system" evidence="1">
    <location>
        <position position="153"/>
    </location>
</feature>
<feature type="active site" description="Acyl-ester intermediate" evidence="1">
    <location>
        <position position="177"/>
    </location>
</feature>
<proteinExistence type="inferred from homology"/>
<gene>
    <name evidence="1" type="primary">gatA</name>
    <name type="ordered locus">Gmet_0075</name>
</gene>
<reference key="1">
    <citation type="journal article" date="2009" name="BMC Microbiol.">
        <title>The genome sequence of Geobacter metallireducens: features of metabolism, physiology and regulation common and dissimilar to Geobacter sulfurreducens.</title>
        <authorList>
            <person name="Aklujkar M."/>
            <person name="Krushkal J."/>
            <person name="DiBartolo G."/>
            <person name="Lapidus A."/>
            <person name="Land M.L."/>
            <person name="Lovley D.R."/>
        </authorList>
    </citation>
    <scope>NUCLEOTIDE SEQUENCE [LARGE SCALE GENOMIC DNA]</scope>
    <source>
        <strain>ATCC 53774 / DSM 7210 / GS-15</strain>
    </source>
</reference>
<organism>
    <name type="scientific">Geobacter metallireducens (strain ATCC 53774 / DSM 7210 / GS-15)</name>
    <dbReference type="NCBI Taxonomy" id="269799"/>
    <lineage>
        <taxon>Bacteria</taxon>
        <taxon>Pseudomonadati</taxon>
        <taxon>Thermodesulfobacteriota</taxon>
        <taxon>Desulfuromonadia</taxon>
        <taxon>Geobacterales</taxon>
        <taxon>Geobacteraceae</taxon>
        <taxon>Geobacter</taxon>
    </lineage>
</organism>
<comment type="function">
    <text evidence="1">Allows the formation of correctly charged Gln-tRNA(Gln) through the transamidation of misacylated Glu-tRNA(Gln) in organisms which lack glutaminyl-tRNA synthetase. The reaction takes place in the presence of glutamine and ATP through an activated gamma-phospho-Glu-tRNA(Gln).</text>
</comment>
<comment type="catalytic activity">
    <reaction evidence="1">
        <text>L-glutamyl-tRNA(Gln) + L-glutamine + ATP + H2O = L-glutaminyl-tRNA(Gln) + L-glutamate + ADP + phosphate + H(+)</text>
        <dbReference type="Rhea" id="RHEA:17521"/>
        <dbReference type="Rhea" id="RHEA-COMP:9681"/>
        <dbReference type="Rhea" id="RHEA-COMP:9684"/>
        <dbReference type="ChEBI" id="CHEBI:15377"/>
        <dbReference type="ChEBI" id="CHEBI:15378"/>
        <dbReference type="ChEBI" id="CHEBI:29985"/>
        <dbReference type="ChEBI" id="CHEBI:30616"/>
        <dbReference type="ChEBI" id="CHEBI:43474"/>
        <dbReference type="ChEBI" id="CHEBI:58359"/>
        <dbReference type="ChEBI" id="CHEBI:78520"/>
        <dbReference type="ChEBI" id="CHEBI:78521"/>
        <dbReference type="ChEBI" id="CHEBI:456216"/>
        <dbReference type="EC" id="6.3.5.7"/>
    </reaction>
</comment>
<comment type="subunit">
    <text evidence="1">Heterotrimer of A, B and C subunits.</text>
</comment>
<comment type="similarity">
    <text evidence="1">Belongs to the amidase family. GatA subfamily.</text>
</comment>
<protein>
    <recommendedName>
        <fullName evidence="1">Glutamyl-tRNA(Gln) amidotransferase subunit A</fullName>
        <shortName evidence="1">Glu-ADT subunit A</shortName>
        <ecNumber evidence="1">6.3.5.7</ecNumber>
    </recommendedName>
</protein>
<sequence>MELFDLTIHELHDRLKRKELSSVEATRAMLARIEAVDPKVNAYITVTPEEALAAAEAADRRIAAGDMAPLTGIPVALKDIFVTKGIRTTCASKILDNFVPPYDGTAVAKLKEAGAVIVGKLNQDEFAMGSSGESSAFGPTRNPWNLECIPGGSSSGSAAAIAARTATATLGTDTGGSIRQPASHCGCVGLRPTYGRVSRYGVIAYASSLDQVGPVTRDVTDCALMLQAVAGHDPMDSTSVEVPVPDYAKGLTGDVKGLKLGLPKEYYIEGLDPDVKKALDEAIETYRGLGAEFVDISLPHTDYAVATYYLIATAEASSNLARYEGVRFGHRTEGAANLIDMFRKTRSEGFGDEVKRRIMIGTYALSSGYYDAYYLKAQKVRTLIMQDFLKAFEAVDAILTPVAPTPAFKIGEKTSDPLRMYLSDIFTIPVNLAGTCAVSVPAGMSGAGLPIGLQLIGRPFGEETILRAAHAFEQATAWHTQKAGI</sequence>
<dbReference type="EC" id="6.3.5.7" evidence="1"/>
<dbReference type="EMBL" id="CP000148">
    <property type="protein sequence ID" value="ABB30324.1"/>
    <property type="molecule type" value="Genomic_DNA"/>
</dbReference>
<dbReference type="RefSeq" id="WP_004514199.1">
    <property type="nucleotide sequence ID" value="NC_007517.1"/>
</dbReference>
<dbReference type="SMR" id="Q39ZK0"/>
<dbReference type="STRING" id="269799.Gmet_0075"/>
<dbReference type="KEGG" id="gme:Gmet_0075"/>
<dbReference type="eggNOG" id="COG0154">
    <property type="taxonomic scope" value="Bacteria"/>
</dbReference>
<dbReference type="HOGENOM" id="CLU_009600_0_3_7"/>
<dbReference type="Proteomes" id="UP000007073">
    <property type="component" value="Chromosome"/>
</dbReference>
<dbReference type="GO" id="GO:0030956">
    <property type="term" value="C:glutamyl-tRNA(Gln) amidotransferase complex"/>
    <property type="evidence" value="ECO:0007669"/>
    <property type="project" value="InterPro"/>
</dbReference>
<dbReference type="GO" id="GO:0005524">
    <property type="term" value="F:ATP binding"/>
    <property type="evidence" value="ECO:0007669"/>
    <property type="project" value="UniProtKB-KW"/>
</dbReference>
<dbReference type="GO" id="GO:0050567">
    <property type="term" value="F:glutaminyl-tRNA synthase (glutamine-hydrolyzing) activity"/>
    <property type="evidence" value="ECO:0007669"/>
    <property type="project" value="UniProtKB-UniRule"/>
</dbReference>
<dbReference type="GO" id="GO:0006412">
    <property type="term" value="P:translation"/>
    <property type="evidence" value="ECO:0007669"/>
    <property type="project" value="UniProtKB-UniRule"/>
</dbReference>
<dbReference type="Gene3D" id="3.90.1300.10">
    <property type="entry name" value="Amidase signature (AS) domain"/>
    <property type="match status" value="1"/>
</dbReference>
<dbReference type="HAMAP" id="MF_00120">
    <property type="entry name" value="GatA"/>
    <property type="match status" value="1"/>
</dbReference>
<dbReference type="InterPro" id="IPR000120">
    <property type="entry name" value="Amidase"/>
</dbReference>
<dbReference type="InterPro" id="IPR020556">
    <property type="entry name" value="Amidase_CS"/>
</dbReference>
<dbReference type="InterPro" id="IPR023631">
    <property type="entry name" value="Amidase_dom"/>
</dbReference>
<dbReference type="InterPro" id="IPR036928">
    <property type="entry name" value="AS_sf"/>
</dbReference>
<dbReference type="InterPro" id="IPR004412">
    <property type="entry name" value="GatA"/>
</dbReference>
<dbReference type="NCBIfam" id="TIGR00132">
    <property type="entry name" value="gatA"/>
    <property type="match status" value="1"/>
</dbReference>
<dbReference type="PANTHER" id="PTHR11895:SF151">
    <property type="entry name" value="GLUTAMYL-TRNA(GLN) AMIDOTRANSFERASE SUBUNIT A"/>
    <property type="match status" value="1"/>
</dbReference>
<dbReference type="PANTHER" id="PTHR11895">
    <property type="entry name" value="TRANSAMIDASE"/>
    <property type="match status" value="1"/>
</dbReference>
<dbReference type="Pfam" id="PF01425">
    <property type="entry name" value="Amidase"/>
    <property type="match status" value="1"/>
</dbReference>
<dbReference type="SUPFAM" id="SSF75304">
    <property type="entry name" value="Amidase signature (AS) enzymes"/>
    <property type="match status" value="1"/>
</dbReference>
<dbReference type="PROSITE" id="PS00571">
    <property type="entry name" value="AMIDASES"/>
    <property type="match status" value="1"/>
</dbReference>
<evidence type="ECO:0000255" key="1">
    <source>
        <dbReference type="HAMAP-Rule" id="MF_00120"/>
    </source>
</evidence>